<name>ISPE_STAAW</name>
<sequence>MIYETAPAKINFTLDTLFKRNDGYHEIEMIMTTVDLNDRLTFHKRKDRKIVVEIEHNYVPSNHKNLAYRAAQLFIEQYQLKQGVTISIDKEIPVSAGLAGGSADAAATLRGLNRLFDIGASLEELALLGSKIGTDIPFCIYNKTALCTGRGEKIEFLNKPPSAWVILAKPNLGISSPDIFKLINLDKRYDVHTKMCYEALENRDYQQLCQSLSNRLEPISVSKHPQIDKLKNNMLKSGADGALMSGSGPTVYGLARKESQAKNIYNAVNGCCNEVYLVRLLG</sequence>
<reference key="1">
    <citation type="journal article" date="2002" name="Lancet">
        <title>Genome and virulence determinants of high virulence community-acquired MRSA.</title>
        <authorList>
            <person name="Baba T."/>
            <person name="Takeuchi F."/>
            <person name="Kuroda M."/>
            <person name="Yuzawa H."/>
            <person name="Aoki K."/>
            <person name="Oguchi A."/>
            <person name="Nagai Y."/>
            <person name="Iwama N."/>
            <person name="Asano K."/>
            <person name="Naimi T."/>
            <person name="Kuroda H."/>
            <person name="Cui L."/>
            <person name="Yamamoto K."/>
            <person name="Hiramatsu K."/>
        </authorList>
    </citation>
    <scope>NUCLEOTIDE SEQUENCE [LARGE SCALE GENOMIC DNA]</scope>
    <source>
        <strain>MW2</strain>
    </source>
</reference>
<evidence type="ECO:0000255" key="1">
    <source>
        <dbReference type="HAMAP-Rule" id="MF_00061"/>
    </source>
</evidence>
<protein>
    <recommendedName>
        <fullName evidence="1">Putative 4-diphosphocytidyl-2-C-methyl-D-erythritol kinase</fullName>
        <shortName evidence="1">CMK</shortName>
        <ecNumber evidence="1">2.7.1.148</ecNumber>
    </recommendedName>
    <alternativeName>
        <fullName evidence="1">4-(cytidine-5'-diphospho)-2-C-methyl-D-erythritol kinase</fullName>
    </alternativeName>
</protein>
<feature type="chain" id="PRO_0000189266" description="Putative 4-diphosphocytidyl-2-C-methyl-D-erythritol kinase">
    <location>
        <begin position="1"/>
        <end position="282"/>
    </location>
</feature>
<feature type="active site" evidence="1">
    <location>
        <position position="9"/>
    </location>
</feature>
<feature type="active site" evidence="1">
    <location>
        <position position="135"/>
    </location>
</feature>
<feature type="binding site" evidence="1">
    <location>
        <begin position="93"/>
        <end position="103"/>
    </location>
    <ligand>
        <name>ATP</name>
        <dbReference type="ChEBI" id="CHEBI:30616"/>
    </ligand>
</feature>
<gene>
    <name type="ordered locus">MW0450</name>
</gene>
<keyword id="KW-0067">ATP-binding</keyword>
<keyword id="KW-0418">Kinase</keyword>
<keyword id="KW-0547">Nucleotide-binding</keyword>
<keyword id="KW-0808">Transferase</keyword>
<comment type="function">
    <text evidence="1">Catalyzes the phosphorylation of the position 2 hydroxy group of 4-diphosphocytidyl-2C-methyl-D-erythritol.</text>
</comment>
<comment type="catalytic activity">
    <reaction evidence="1">
        <text>4-CDP-2-C-methyl-D-erythritol + ATP = 4-CDP-2-C-methyl-D-erythritol 2-phosphate + ADP + H(+)</text>
        <dbReference type="Rhea" id="RHEA:18437"/>
        <dbReference type="ChEBI" id="CHEBI:15378"/>
        <dbReference type="ChEBI" id="CHEBI:30616"/>
        <dbReference type="ChEBI" id="CHEBI:57823"/>
        <dbReference type="ChEBI" id="CHEBI:57919"/>
        <dbReference type="ChEBI" id="CHEBI:456216"/>
        <dbReference type="EC" id="2.7.1.148"/>
    </reaction>
</comment>
<comment type="similarity">
    <text evidence="1">Belongs to the GHMP kinase family. IspE subfamily.</text>
</comment>
<accession>P65182</accession>
<accession>Q99WA8</accession>
<proteinExistence type="inferred from homology"/>
<organism>
    <name type="scientific">Staphylococcus aureus (strain MW2)</name>
    <dbReference type="NCBI Taxonomy" id="196620"/>
    <lineage>
        <taxon>Bacteria</taxon>
        <taxon>Bacillati</taxon>
        <taxon>Bacillota</taxon>
        <taxon>Bacilli</taxon>
        <taxon>Bacillales</taxon>
        <taxon>Staphylococcaceae</taxon>
        <taxon>Staphylococcus</taxon>
    </lineage>
</organism>
<dbReference type="EC" id="2.7.1.148" evidence="1"/>
<dbReference type="EMBL" id="BA000033">
    <property type="protein sequence ID" value="BAB94315.1"/>
    <property type="molecule type" value="Genomic_DNA"/>
</dbReference>
<dbReference type="SMR" id="P65182"/>
<dbReference type="KEGG" id="sam:MW0450"/>
<dbReference type="HOGENOM" id="CLU_053057_1_1_9"/>
<dbReference type="GO" id="GO:0050515">
    <property type="term" value="F:4-(cytidine 5'-diphospho)-2-C-methyl-D-erythritol kinase activity"/>
    <property type="evidence" value="ECO:0007669"/>
    <property type="project" value="UniProtKB-UniRule"/>
</dbReference>
<dbReference type="GO" id="GO:0005524">
    <property type="term" value="F:ATP binding"/>
    <property type="evidence" value="ECO:0007669"/>
    <property type="project" value="UniProtKB-UniRule"/>
</dbReference>
<dbReference type="GO" id="GO:0016114">
    <property type="term" value="P:terpenoid biosynthetic process"/>
    <property type="evidence" value="ECO:0007669"/>
    <property type="project" value="InterPro"/>
</dbReference>
<dbReference type="FunFam" id="3.30.230.10:FF:000029">
    <property type="entry name" value="4-diphosphocytidyl-2-C-methyl-D-erythritol kinase"/>
    <property type="match status" value="1"/>
</dbReference>
<dbReference type="FunFam" id="3.30.70.890:FF:000006">
    <property type="entry name" value="4-diphosphocytidyl-2-C-methyl-D-erythritol kinase"/>
    <property type="match status" value="1"/>
</dbReference>
<dbReference type="Gene3D" id="3.30.230.10">
    <property type="match status" value="1"/>
</dbReference>
<dbReference type="Gene3D" id="3.30.70.890">
    <property type="entry name" value="GHMP kinase, C-terminal domain"/>
    <property type="match status" value="1"/>
</dbReference>
<dbReference type="HAMAP" id="MF_00061">
    <property type="entry name" value="IspE"/>
    <property type="match status" value="1"/>
</dbReference>
<dbReference type="InterPro" id="IPR013750">
    <property type="entry name" value="GHMP_kinase_C_dom"/>
</dbReference>
<dbReference type="InterPro" id="IPR036554">
    <property type="entry name" value="GHMP_kinase_C_sf"/>
</dbReference>
<dbReference type="InterPro" id="IPR006204">
    <property type="entry name" value="GHMP_kinase_N_dom"/>
</dbReference>
<dbReference type="InterPro" id="IPR004424">
    <property type="entry name" value="IspE"/>
</dbReference>
<dbReference type="InterPro" id="IPR020568">
    <property type="entry name" value="Ribosomal_Su5_D2-typ_SF"/>
</dbReference>
<dbReference type="InterPro" id="IPR014721">
    <property type="entry name" value="Ribsml_uS5_D2-typ_fold_subgr"/>
</dbReference>
<dbReference type="NCBIfam" id="TIGR00154">
    <property type="entry name" value="ispE"/>
    <property type="match status" value="1"/>
</dbReference>
<dbReference type="PANTHER" id="PTHR43527">
    <property type="entry name" value="4-DIPHOSPHOCYTIDYL-2-C-METHYL-D-ERYTHRITOL KINASE, CHLOROPLASTIC"/>
    <property type="match status" value="1"/>
</dbReference>
<dbReference type="PANTHER" id="PTHR43527:SF2">
    <property type="entry name" value="4-DIPHOSPHOCYTIDYL-2-C-METHYL-D-ERYTHRITOL KINASE, CHLOROPLASTIC"/>
    <property type="match status" value="1"/>
</dbReference>
<dbReference type="Pfam" id="PF08544">
    <property type="entry name" value="GHMP_kinases_C"/>
    <property type="match status" value="1"/>
</dbReference>
<dbReference type="Pfam" id="PF00288">
    <property type="entry name" value="GHMP_kinases_N"/>
    <property type="match status" value="1"/>
</dbReference>
<dbReference type="PIRSF" id="PIRSF010376">
    <property type="entry name" value="IspE"/>
    <property type="match status" value="1"/>
</dbReference>
<dbReference type="SUPFAM" id="SSF55060">
    <property type="entry name" value="GHMP Kinase, C-terminal domain"/>
    <property type="match status" value="1"/>
</dbReference>
<dbReference type="SUPFAM" id="SSF54211">
    <property type="entry name" value="Ribosomal protein S5 domain 2-like"/>
    <property type="match status" value="1"/>
</dbReference>